<gene>
    <name evidence="1" type="primary">purN</name>
    <name type="ordered locus">SERP0657</name>
</gene>
<name>PUR3_STAEQ</name>
<reference key="1">
    <citation type="journal article" date="2005" name="J. Bacteriol.">
        <title>Insights on evolution of virulence and resistance from the complete genome analysis of an early methicillin-resistant Staphylococcus aureus strain and a biofilm-producing methicillin-resistant Staphylococcus epidermidis strain.</title>
        <authorList>
            <person name="Gill S.R."/>
            <person name="Fouts D.E."/>
            <person name="Archer G.L."/>
            <person name="Mongodin E.F."/>
            <person name="DeBoy R.T."/>
            <person name="Ravel J."/>
            <person name="Paulsen I.T."/>
            <person name="Kolonay J.F."/>
            <person name="Brinkac L.M."/>
            <person name="Beanan M.J."/>
            <person name="Dodson R.J."/>
            <person name="Daugherty S.C."/>
            <person name="Madupu R."/>
            <person name="Angiuoli S.V."/>
            <person name="Durkin A.S."/>
            <person name="Haft D.H."/>
            <person name="Vamathevan J.J."/>
            <person name="Khouri H."/>
            <person name="Utterback T.R."/>
            <person name="Lee C."/>
            <person name="Dimitrov G."/>
            <person name="Jiang L."/>
            <person name="Qin H."/>
            <person name="Weidman J."/>
            <person name="Tran K."/>
            <person name="Kang K.H."/>
            <person name="Hance I.R."/>
            <person name="Nelson K.E."/>
            <person name="Fraser C.M."/>
        </authorList>
    </citation>
    <scope>NUCLEOTIDE SEQUENCE [LARGE SCALE GENOMIC DNA]</scope>
    <source>
        <strain>ATCC 35984 / DSM 28319 / BCRC 17069 / CCUG 31568 / BM 3577 / RP62A</strain>
    </source>
</reference>
<accession>Q5HQ98</accession>
<protein>
    <recommendedName>
        <fullName evidence="1">Phosphoribosylglycinamide formyltransferase</fullName>
        <ecNumber evidence="1">2.1.2.2</ecNumber>
    </recommendedName>
    <alternativeName>
        <fullName evidence="1">5'-phosphoribosylglycinamide transformylase</fullName>
    </alternativeName>
    <alternativeName>
        <fullName evidence="1">GAR transformylase</fullName>
        <shortName evidence="1">GART</shortName>
    </alternativeName>
</protein>
<organism>
    <name type="scientific">Staphylococcus epidermidis (strain ATCC 35984 / DSM 28319 / BCRC 17069 / CCUG 31568 / BM 3577 / RP62A)</name>
    <dbReference type="NCBI Taxonomy" id="176279"/>
    <lineage>
        <taxon>Bacteria</taxon>
        <taxon>Bacillati</taxon>
        <taxon>Bacillota</taxon>
        <taxon>Bacilli</taxon>
        <taxon>Bacillales</taxon>
        <taxon>Staphylococcaceae</taxon>
        <taxon>Staphylococcus</taxon>
    </lineage>
</organism>
<sequence length="188" mass="20965">MTNIAIFASGSGSNFENIVKHIQTGQLSGINVTALYTDNEGVPCIDRAKNLNIPIHINKPKDFSSKSLYEQHLLKLLSSEEVQWIVLAGYMRLVGQDLLQAYEGRILNIHPSLLPKFKGLDAIGQALESGDTVTGSTVHYVDSGMDTGEIIEQQQCDIKPDDTKEQLEDRVKHLEYELYPRVIAKIIK</sequence>
<proteinExistence type="inferred from homology"/>
<comment type="function">
    <text evidence="1">Catalyzes the transfer of a formyl group from 10-formyltetrahydrofolate to 5-phospho-ribosyl-glycinamide (GAR), producing 5-phospho-ribosyl-N-formylglycinamide (FGAR) and tetrahydrofolate.</text>
</comment>
<comment type="catalytic activity">
    <reaction evidence="1">
        <text>N(1)-(5-phospho-beta-D-ribosyl)glycinamide + (6R)-10-formyltetrahydrofolate = N(2)-formyl-N(1)-(5-phospho-beta-D-ribosyl)glycinamide + (6S)-5,6,7,8-tetrahydrofolate + H(+)</text>
        <dbReference type="Rhea" id="RHEA:15053"/>
        <dbReference type="ChEBI" id="CHEBI:15378"/>
        <dbReference type="ChEBI" id="CHEBI:57453"/>
        <dbReference type="ChEBI" id="CHEBI:143788"/>
        <dbReference type="ChEBI" id="CHEBI:147286"/>
        <dbReference type="ChEBI" id="CHEBI:195366"/>
        <dbReference type="EC" id="2.1.2.2"/>
    </reaction>
</comment>
<comment type="pathway">
    <text evidence="1">Purine metabolism; IMP biosynthesis via de novo pathway; N(2)-formyl-N(1)-(5-phospho-D-ribosyl)glycinamide from N(1)-(5-phospho-D-ribosyl)glycinamide (10-formyl THF route): step 1/1.</text>
</comment>
<comment type="similarity">
    <text evidence="1">Belongs to the GART family.</text>
</comment>
<feature type="chain" id="PRO_0000074952" description="Phosphoribosylglycinamide formyltransferase">
    <location>
        <begin position="1"/>
        <end position="188"/>
    </location>
</feature>
<feature type="active site" description="Proton donor" evidence="1">
    <location>
        <position position="110"/>
    </location>
</feature>
<feature type="binding site" evidence="1">
    <location>
        <begin position="12"/>
        <end position="14"/>
    </location>
    <ligand>
        <name>N(1)-(5-phospho-beta-D-ribosyl)glycinamide</name>
        <dbReference type="ChEBI" id="CHEBI:143788"/>
    </ligand>
</feature>
<feature type="binding site" evidence="1">
    <location>
        <position position="66"/>
    </location>
    <ligand>
        <name>(6R)-10-formyltetrahydrofolate</name>
        <dbReference type="ChEBI" id="CHEBI:195366"/>
    </ligand>
</feature>
<feature type="binding site" evidence="1">
    <location>
        <begin position="91"/>
        <end position="94"/>
    </location>
    <ligand>
        <name>(6R)-10-formyltetrahydrofolate</name>
        <dbReference type="ChEBI" id="CHEBI:195366"/>
    </ligand>
</feature>
<feature type="binding site" evidence="1">
    <location>
        <position position="108"/>
    </location>
    <ligand>
        <name>(6R)-10-formyltetrahydrofolate</name>
        <dbReference type="ChEBI" id="CHEBI:195366"/>
    </ligand>
</feature>
<feature type="site" description="Raises pKa of active site His" evidence="1">
    <location>
        <position position="146"/>
    </location>
</feature>
<dbReference type="EC" id="2.1.2.2" evidence="1"/>
<dbReference type="EMBL" id="CP000029">
    <property type="protein sequence ID" value="AAW54010.1"/>
    <property type="molecule type" value="Genomic_DNA"/>
</dbReference>
<dbReference type="RefSeq" id="WP_001831672.1">
    <property type="nucleotide sequence ID" value="NC_002976.3"/>
</dbReference>
<dbReference type="SMR" id="Q5HQ98"/>
<dbReference type="STRING" id="176279.SERP0657"/>
<dbReference type="GeneID" id="50019090"/>
<dbReference type="KEGG" id="ser:SERP0657"/>
<dbReference type="eggNOG" id="COG0299">
    <property type="taxonomic scope" value="Bacteria"/>
</dbReference>
<dbReference type="HOGENOM" id="CLU_038395_1_3_9"/>
<dbReference type="UniPathway" id="UPA00074">
    <property type="reaction ID" value="UER00126"/>
</dbReference>
<dbReference type="Proteomes" id="UP000000531">
    <property type="component" value="Chromosome"/>
</dbReference>
<dbReference type="GO" id="GO:0005829">
    <property type="term" value="C:cytosol"/>
    <property type="evidence" value="ECO:0007669"/>
    <property type="project" value="TreeGrafter"/>
</dbReference>
<dbReference type="GO" id="GO:0004644">
    <property type="term" value="F:phosphoribosylglycinamide formyltransferase activity"/>
    <property type="evidence" value="ECO:0007669"/>
    <property type="project" value="UniProtKB-UniRule"/>
</dbReference>
<dbReference type="GO" id="GO:0006189">
    <property type="term" value="P:'de novo' IMP biosynthetic process"/>
    <property type="evidence" value="ECO:0007669"/>
    <property type="project" value="UniProtKB-UniRule"/>
</dbReference>
<dbReference type="CDD" id="cd08645">
    <property type="entry name" value="FMT_core_GART"/>
    <property type="match status" value="1"/>
</dbReference>
<dbReference type="Gene3D" id="3.40.50.170">
    <property type="entry name" value="Formyl transferase, N-terminal domain"/>
    <property type="match status" value="1"/>
</dbReference>
<dbReference type="HAMAP" id="MF_01930">
    <property type="entry name" value="PurN"/>
    <property type="match status" value="1"/>
</dbReference>
<dbReference type="InterPro" id="IPR002376">
    <property type="entry name" value="Formyl_transf_N"/>
</dbReference>
<dbReference type="InterPro" id="IPR036477">
    <property type="entry name" value="Formyl_transf_N_sf"/>
</dbReference>
<dbReference type="InterPro" id="IPR004607">
    <property type="entry name" value="GART"/>
</dbReference>
<dbReference type="NCBIfam" id="TIGR00639">
    <property type="entry name" value="PurN"/>
    <property type="match status" value="1"/>
</dbReference>
<dbReference type="PANTHER" id="PTHR43369">
    <property type="entry name" value="PHOSPHORIBOSYLGLYCINAMIDE FORMYLTRANSFERASE"/>
    <property type="match status" value="1"/>
</dbReference>
<dbReference type="PANTHER" id="PTHR43369:SF2">
    <property type="entry name" value="PHOSPHORIBOSYLGLYCINAMIDE FORMYLTRANSFERASE"/>
    <property type="match status" value="1"/>
</dbReference>
<dbReference type="Pfam" id="PF00551">
    <property type="entry name" value="Formyl_trans_N"/>
    <property type="match status" value="1"/>
</dbReference>
<dbReference type="SUPFAM" id="SSF53328">
    <property type="entry name" value="Formyltransferase"/>
    <property type="match status" value="1"/>
</dbReference>
<evidence type="ECO:0000255" key="1">
    <source>
        <dbReference type="HAMAP-Rule" id="MF_01930"/>
    </source>
</evidence>
<keyword id="KW-0658">Purine biosynthesis</keyword>
<keyword id="KW-1185">Reference proteome</keyword>
<keyword id="KW-0808">Transferase</keyword>